<dbReference type="EMBL" id="CP000053">
    <property type="protein sequence ID" value="AAY61915.1"/>
    <property type="molecule type" value="Genomic_DNA"/>
</dbReference>
<dbReference type="SMR" id="Q4UKL2"/>
<dbReference type="STRING" id="315456.RF_1064"/>
<dbReference type="KEGG" id="rfe:RF_1064"/>
<dbReference type="eggNOG" id="COG0633">
    <property type="taxonomic scope" value="Bacteria"/>
</dbReference>
<dbReference type="HOGENOM" id="CLU_082632_5_0_5"/>
<dbReference type="OrthoDB" id="9799640at2"/>
<dbReference type="Proteomes" id="UP000008548">
    <property type="component" value="Chromosome"/>
</dbReference>
<dbReference type="GO" id="GO:0051537">
    <property type="term" value="F:2 iron, 2 sulfur cluster binding"/>
    <property type="evidence" value="ECO:0007669"/>
    <property type="project" value="UniProtKB-KW"/>
</dbReference>
<dbReference type="GO" id="GO:0009055">
    <property type="term" value="F:electron transfer activity"/>
    <property type="evidence" value="ECO:0007669"/>
    <property type="project" value="TreeGrafter"/>
</dbReference>
<dbReference type="GO" id="GO:0046872">
    <property type="term" value="F:metal ion binding"/>
    <property type="evidence" value="ECO:0007669"/>
    <property type="project" value="UniProtKB-KW"/>
</dbReference>
<dbReference type="GO" id="GO:0140647">
    <property type="term" value="P:P450-containing electron transport chain"/>
    <property type="evidence" value="ECO:0007669"/>
    <property type="project" value="InterPro"/>
</dbReference>
<dbReference type="CDD" id="cd00207">
    <property type="entry name" value="fer2"/>
    <property type="match status" value="1"/>
</dbReference>
<dbReference type="Gene3D" id="3.10.20.30">
    <property type="match status" value="1"/>
</dbReference>
<dbReference type="InterPro" id="IPR036010">
    <property type="entry name" value="2Fe-2S_ferredoxin-like_sf"/>
</dbReference>
<dbReference type="InterPro" id="IPR001041">
    <property type="entry name" value="2Fe-2S_ferredoxin-type"/>
</dbReference>
<dbReference type="InterPro" id="IPR001055">
    <property type="entry name" value="Adrenodoxin-like"/>
</dbReference>
<dbReference type="InterPro" id="IPR018298">
    <property type="entry name" value="Adrenodoxin_Fe-S_BS"/>
</dbReference>
<dbReference type="InterPro" id="IPR012675">
    <property type="entry name" value="Beta-grasp_dom_sf"/>
</dbReference>
<dbReference type="PANTHER" id="PTHR23426:SF72">
    <property type="entry name" value="2FE-2S FERREDOXIN-TYPE DOMAIN-CONTAINING PROTEIN"/>
    <property type="match status" value="1"/>
</dbReference>
<dbReference type="PANTHER" id="PTHR23426">
    <property type="entry name" value="FERREDOXIN/ADRENODOXIN"/>
    <property type="match status" value="1"/>
</dbReference>
<dbReference type="Pfam" id="PF00111">
    <property type="entry name" value="Fer2"/>
    <property type="match status" value="1"/>
</dbReference>
<dbReference type="PRINTS" id="PR00355">
    <property type="entry name" value="ADRENODOXIN"/>
</dbReference>
<dbReference type="SUPFAM" id="SSF54292">
    <property type="entry name" value="2Fe-2S ferredoxin-like"/>
    <property type="match status" value="1"/>
</dbReference>
<dbReference type="PROSITE" id="PS51085">
    <property type="entry name" value="2FE2S_FER_2"/>
    <property type="match status" value="1"/>
</dbReference>
<dbReference type="PROSITE" id="PS00814">
    <property type="entry name" value="ADX"/>
    <property type="match status" value="1"/>
</dbReference>
<sequence>MSGKIKVTFIVNDGEEKTVEAPIGLSILEITHSNDLDLEGACEGSLACATCHVILEEEFYNKLKKPTEAEEDMLDLAFGLTDTSRLGCQIILTEELDGIKVRLPSATRNIKL</sequence>
<gene>
    <name type="primary">fdxB</name>
    <name type="ordered locus">RF_1064</name>
</gene>
<feature type="chain" id="PRO_0000201175" description="2Fe-2S ferredoxin">
    <location>
        <begin position="1"/>
        <end position="112"/>
    </location>
</feature>
<feature type="domain" description="2Fe-2S ferredoxin-type" evidence="2">
    <location>
        <begin position="5"/>
        <end position="107"/>
    </location>
</feature>
<feature type="binding site" evidence="2">
    <location>
        <position position="42"/>
    </location>
    <ligand>
        <name>[2Fe-2S] cluster</name>
        <dbReference type="ChEBI" id="CHEBI:190135"/>
    </ligand>
</feature>
<feature type="binding site" evidence="2">
    <location>
        <position position="48"/>
    </location>
    <ligand>
        <name>[2Fe-2S] cluster</name>
        <dbReference type="ChEBI" id="CHEBI:190135"/>
    </ligand>
</feature>
<feature type="binding site" evidence="2">
    <location>
        <position position="51"/>
    </location>
    <ligand>
        <name>[2Fe-2S] cluster</name>
        <dbReference type="ChEBI" id="CHEBI:190135"/>
    </ligand>
</feature>
<feature type="binding site" evidence="2">
    <location>
        <position position="88"/>
    </location>
    <ligand>
        <name>[2Fe-2S] cluster</name>
        <dbReference type="ChEBI" id="CHEBI:190135"/>
    </ligand>
</feature>
<organism>
    <name type="scientific">Rickettsia felis (strain ATCC VR-1525 / URRWXCal2)</name>
    <name type="common">Rickettsia azadi</name>
    <dbReference type="NCBI Taxonomy" id="315456"/>
    <lineage>
        <taxon>Bacteria</taxon>
        <taxon>Pseudomonadati</taxon>
        <taxon>Pseudomonadota</taxon>
        <taxon>Alphaproteobacteria</taxon>
        <taxon>Rickettsiales</taxon>
        <taxon>Rickettsiaceae</taxon>
        <taxon>Rickettsieae</taxon>
        <taxon>Rickettsia</taxon>
        <taxon>spotted fever group</taxon>
    </lineage>
</organism>
<accession>Q4UKL2</accession>
<evidence type="ECO:0000250" key="1"/>
<evidence type="ECO:0000255" key="2">
    <source>
        <dbReference type="PROSITE-ProRule" id="PRU00465"/>
    </source>
</evidence>
<evidence type="ECO:0000305" key="3"/>
<protein>
    <recommendedName>
        <fullName>2Fe-2S ferredoxin</fullName>
    </recommendedName>
    <alternativeName>
        <fullName>Adrenodoxin-like protein</fullName>
    </alternativeName>
</protein>
<keyword id="KW-0001">2Fe-2S</keyword>
<keyword id="KW-0249">Electron transport</keyword>
<keyword id="KW-0408">Iron</keyword>
<keyword id="KW-0411">Iron-sulfur</keyword>
<keyword id="KW-0479">Metal-binding</keyword>
<keyword id="KW-0813">Transport</keyword>
<comment type="function">
    <text>Ferredoxin are iron-sulfur proteins that transfer electrons in a wide variety of metabolic reactions.</text>
</comment>
<comment type="cofactor">
    <cofactor evidence="1">
        <name>[2Fe-2S] cluster</name>
        <dbReference type="ChEBI" id="CHEBI:190135"/>
    </cofactor>
    <text evidence="1">Binds 1 [2Fe-2S] cluster.</text>
</comment>
<comment type="similarity">
    <text evidence="3">Belongs to the adrenodoxin/putidaredoxin family.</text>
</comment>
<reference key="1">
    <citation type="journal article" date="2005" name="PLoS Biol.">
        <title>The genome sequence of Rickettsia felis identifies the first putative conjugative plasmid in an obligate intracellular parasite.</title>
        <authorList>
            <person name="Ogata H."/>
            <person name="Renesto P."/>
            <person name="Audic S."/>
            <person name="Robert C."/>
            <person name="Blanc G."/>
            <person name="Fournier P.-E."/>
            <person name="Parinello H."/>
            <person name="Claverie J.-M."/>
            <person name="Raoult D."/>
        </authorList>
    </citation>
    <scope>NUCLEOTIDE SEQUENCE [LARGE SCALE GENOMIC DNA]</scope>
    <source>
        <strain>ATCC VR-1525 / URRWXCal2</strain>
    </source>
</reference>
<proteinExistence type="inferred from homology"/>
<name>FER2_RICFE</name>